<sequence length="843" mass="95960">MGFLSKILDGNNKEIKQLGKLADKVIALEEKTAILTDEEIRNKTKQFQTELADIDNVKKQNDYLDKILPEAYALVREGSKRVFNMTPYKVQIMGGIAIHKGDIAEMRTGEGKTLTATMPTYLNALAGRGVHVITVNEYLSSVQSEEMAELYNFLGLTVGLNLNSKTTEEKREAYAQDITYSTNNELGFDYLRDNMVNYSEDRVMRPLHFAIIDEVDSILIDEARTPLIISGEAEKSTSLYTQANVFAKMLKQDEDYKYDEKTKAVHLTEQGADKAERMFKVENLYDVQNVDVISHINTALRAHVTLQRDVDYMVVDGEVLIVDQFTGRTMPGRRFSEGLHQAIEAKEGVQIQNESKTMASITFQNYFRMYNKLAGMTGTAKTEEEEFRNIYNMTVTQIPTNKPVQRNDKSDLIYISQKGKFDAVVEDVVEKHKAGQPVLLGTVAVETSEYISNLLKKRGIRHDVLNAKNHEREAEIVAGAGQKGAVTIATNMAGRGTDIKLGEGVEELGGLAVIGTERHESRRIDDQLRGRSGRQGDKGDSRFYLSLQDELMIRFGSERLQKMMSRLGLDDSTPIESKMVSRAVESAQKRVEGNNFDARKRILEYDEVLRKQREIIYNERNSIIDEEDSSQVVDAMLRSTLQRSINYYINTADDEPEYQPFIDYINDIFLQEGDITEDDIKGKDAEDIFEVVWAKIEAAYQSQKDILEEQMNEFERMILLRSIDSHWTDHIDTMDQLRQGIHLRSYAQQNPLRDYQNEGHELFDIMMQNIEEDTCKFILKSVVQVEDNIEREKTTEFGEAKHVSAEDGKEKVKPKPIVKGDQVGRNDDCPCGSGKKFKNCHGK</sequence>
<protein>
    <recommendedName>
        <fullName evidence="1">Protein translocase subunit SecA 1</fullName>
        <ecNumber evidence="1">7.4.2.8</ecNumber>
    </recommendedName>
</protein>
<accession>Q2FIN8</accession>
<dbReference type="EC" id="7.4.2.8" evidence="1"/>
<dbReference type="EMBL" id="CP000255">
    <property type="protein sequence ID" value="ABD22527.1"/>
    <property type="molecule type" value="Genomic_DNA"/>
</dbReference>
<dbReference type="SMR" id="Q2FIN8"/>
<dbReference type="KEGG" id="saa:SAUSA300_0737"/>
<dbReference type="HOGENOM" id="CLU_005314_3_0_9"/>
<dbReference type="OMA" id="MVHYDVQ"/>
<dbReference type="Proteomes" id="UP000001939">
    <property type="component" value="Chromosome"/>
</dbReference>
<dbReference type="GO" id="GO:0031522">
    <property type="term" value="C:cell envelope Sec protein transport complex"/>
    <property type="evidence" value="ECO:0007669"/>
    <property type="project" value="TreeGrafter"/>
</dbReference>
<dbReference type="GO" id="GO:0005829">
    <property type="term" value="C:cytosol"/>
    <property type="evidence" value="ECO:0007669"/>
    <property type="project" value="TreeGrafter"/>
</dbReference>
<dbReference type="GO" id="GO:0005886">
    <property type="term" value="C:plasma membrane"/>
    <property type="evidence" value="ECO:0007669"/>
    <property type="project" value="UniProtKB-SubCell"/>
</dbReference>
<dbReference type="GO" id="GO:0005524">
    <property type="term" value="F:ATP binding"/>
    <property type="evidence" value="ECO:0007669"/>
    <property type="project" value="UniProtKB-UniRule"/>
</dbReference>
<dbReference type="GO" id="GO:0046872">
    <property type="term" value="F:metal ion binding"/>
    <property type="evidence" value="ECO:0007669"/>
    <property type="project" value="UniProtKB-KW"/>
</dbReference>
<dbReference type="GO" id="GO:0008564">
    <property type="term" value="F:protein-exporting ATPase activity"/>
    <property type="evidence" value="ECO:0007669"/>
    <property type="project" value="UniProtKB-EC"/>
</dbReference>
<dbReference type="GO" id="GO:0065002">
    <property type="term" value="P:intracellular protein transmembrane transport"/>
    <property type="evidence" value="ECO:0007669"/>
    <property type="project" value="UniProtKB-UniRule"/>
</dbReference>
<dbReference type="GO" id="GO:0017038">
    <property type="term" value="P:protein import"/>
    <property type="evidence" value="ECO:0007669"/>
    <property type="project" value="InterPro"/>
</dbReference>
<dbReference type="GO" id="GO:0006605">
    <property type="term" value="P:protein targeting"/>
    <property type="evidence" value="ECO:0007669"/>
    <property type="project" value="UniProtKB-UniRule"/>
</dbReference>
<dbReference type="GO" id="GO:0043952">
    <property type="term" value="P:protein transport by the Sec complex"/>
    <property type="evidence" value="ECO:0007669"/>
    <property type="project" value="TreeGrafter"/>
</dbReference>
<dbReference type="CDD" id="cd17928">
    <property type="entry name" value="DEXDc_SecA"/>
    <property type="match status" value="1"/>
</dbReference>
<dbReference type="CDD" id="cd18803">
    <property type="entry name" value="SF2_C_secA"/>
    <property type="match status" value="1"/>
</dbReference>
<dbReference type="FunFam" id="3.40.50.300:FF:000694">
    <property type="entry name" value="Preprotein translocase subunit SecA"/>
    <property type="match status" value="1"/>
</dbReference>
<dbReference type="FunFam" id="3.90.1440.10:FF:000002">
    <property type="entry name" value="Protein translocase subunit SecA"/>
    <property type="match status" value="1"/>
</dbReference>
<dbReference type="Gene3D" id="1.10.3060.10">
    <property type="entry name" value="Helical scaffold and wing domains of SecA"/>
    <property type="match status" value="1"/>
</dbReference>
<dbReference type="Gene3D" id="3.40.50.300">
    <property type="entry name" value="P-loop containing nucleotide triphosphate hydrolases"/>
    <property type="match status" value="2"/>
</dbReference>
<dbReference type="Gene3D" id="3.90.1440.10">
    <property type="entry name" value="SecA, preprotein cross-linking domain"/>
    <property type="match status" value="1"/>
</dbReference>
<dbReference type="HAMAP" id="MF_01382">
    <property type="entry name" value="SecA"/>
    <property type="match status" value="1"/>
</dbReference>
<dbReference type="InterPro" id="IPR014001">
    <property type="entry name" value="Helicase_ATP-bd"/>
</dbReference>
<dbReference type="InterPro" id="IPR001650">
    <property type="entry name" value="Helicase_C-like"/>
</dbReference>
<dbReference type="InterPro" id="IPR027417">
    <property type="entry name" value="P-loop_NTPase"/>
</dbReference>
<dbReference type="InterPro" id="IPR004027">
    <property type="entry name" value="SEC_C_motif"/>
</dbReference>
<dbReference type="InterPro" id="IPR000185">
    <property type="entry name" value="SecA"/>
</dbReference>
<dbReference type="InterPro" id="IPR020937">
    <property type="entry name" value="SecA_CS"/>
</dbReference>
<dbReference type="InterPro" id="IPR011115">
    <property type="entry name" value="SecA_DEAD"/>
</dbReference>
<dbReference type="InterPro" id="IPR014018">
    <property type="entry name" value="SecA_motor_DEAD"/>
</dbReference>
<dbReference type="InterPro" id="IPR011130">
    <property type="entry name" value="SecA_preprotein_X-link_dom"/>
</dbReference>
<dbReference type="InterPro" id="IPR044722">
    <property type="entry name" value="SecA_SF2_C"/>
</dbReference>
<dbReference type="InterPro" id="IPR011116">
    <property type="entry name" value="SecA_Wing/Scaffold"/>
</dbReference>
<dbReference type="InterPro" id="IPR036266">
    <property type="entry name" value="SecA_Wing/Scaffold_sf"/>
</dbReference>
<dbReference type="InterPro" id="IPR036670">
    <property type="entry name" value="SecA_X-link_sf"/>
</dbReference>
<dbReference type="NCBIfam" id="NF006630">
    <property type="entry name" value="PRK09200.1"/>
    <property type="match status" value="1"/>
</dbReference>
<dbReference type="NCBIfam" id="TIGR00963">
    <property type="entry name" value="secA"/>
    <property type="match status" value="1"/>
</dbReference>
<dbReference type="PANTHER" id="PTHR30612:SF0">
    <property type="entry name" value="CHLOROPLAST PROTEIN-TRANSPORTING ATPASE"/>
    <property type="match status" value="1"/>
</dbReference>
<dbReference type="PANTHER" id="PTHR30612">
    <property type="entry name" value="SECA INNER MEMBRANE COMPONENT OF SEC PROTEIN SECRETION SYSTEM"/>
    <property type="match status" value="1"/>
</dbReference>
<dbReference type="Pfam" id="PF21090">
    <property type="entry name" value="P-loop_SecA"/>
    <property type="match status" value="1"/>
</dbReference>
<dbReference type="Pfam" id="PF02810">
    <property type="entry name" value="SEC-C"/>
    <property type="match status" value="1"/>
</dbReference>
<dbReference type="Pfam" id="PF07517">
    <property type="entry name" value="SecA_DEAD"/>
    <property type="match status" value="1"/>
</dbReference>
<dbReference type="Pfam" id="PF01043">
    <property type="entry name" value="SecA_PP_bind"/>
    <property type="match status" value="1"/>
</dbReference>
<dbReference type="Pfam" id="PF07516">
    <property type="entry name" value="SecA_SW"/>
    <property type="match status" value="1"/>
</dbReference>
<dbReference type="PRINTS" id="PR00906">
    <property type="entry name" value="SECA"/>
</dbReference>
<dbReference type="SMART" id="SM00957">
    <property type="entry name" value="SecA_DEAD"/>
    <property type="match status" value="1"/>
</dbReference>
<dbReference type="SMART" id="SM00958">
    <property type="entry name" value="SecA_PP_bind"/>
    <property type="match status" value="1"/>
</dbReference>
<dbReference type="SUPFAM" id="SSF81886">
    <property type="entry name" value="Helical scaffold and wing domains of SecA"/>
    <property type="match status" value="1"/>
</dbReference>
<dbReference type="SUPFAM" id="SSF52540">
    <property type="entry name" value="P-loop containing nucleoside triphosphate hydrolases"/>
    <property type="match status" value="2"/>
</dbReference>
<dbReference type="SUPFAM" id="SSF81767">
    <property type="entry name" value="Pre-protein crosslinking domain of SecA"/>
    <property type="match status" value="1"/>
</dbReference>
<dbReference type="PROSITE" id="PS01312">
    <property type="entry name" value="SECA"/>
    <property type="match status" value="1"/>
</dbReference>
<dbReference type="PROSITE" id="PS51196">
    <property type="entry name" value="SECA_MOTOR_DEAD"/>
    <property type="match status" value="1"/>
</dbReference>
<name>SECA1_STAA3</name>
<organism>
    <name type="scientific">Staphylococcus aureus (strain USA300)</name>
    <dbReference type="NCBI Taxonomy" id="367830"/>
    <lineage>
        <taxon>Bacteria</taxon>
        <taxon>Bacillati</taxon>
        <taxon>Bacillota</taxon>
        <taxon>Bacilli</taxon>
        <taxon>Bacillales</taxon>
        <taxon>Staphylococcaceae</taxon>
        <taxon>Staphylococcus</taxon>
    </lineage>
</organism>
<reference key="1">
    <citation type="journal article" date="2006" name="Lancet">
        <title>Complete genome sequence of USA300, an epidemic clone of community-acquired meticillin-resistant Staphylococcus aureus.</title>
        <authorList>
            <person name="Diep B.A."/>
            <person name="Gill S.R."/>
            <person name="Chang R.F."/>
            <person name="Phan T.H."/>
            <person name="Chen J.H."/>
            <person name="Davidson M.G."/>
            <person name="Lin F."/>
            <person name="Lin J."/>
            <person name="Carleton H.A."/>
            <person name="Mongodin E.F."/>
            <person name="Sensabaugh G.F."/>
            <person name="Perdreau-Remington F."/>
        </authorList>
    </citation>
    <scope>NUCLEOTIDE SEQUENCE [LARGE SCALE GENOMIC DNA]</scope>
    <source>
        <strain>USA300</strain>
    </source>
</reference>
<proteinExistence type="inferred from homology"/>
<comment type="function">
    <text evidence="1">Part of the Sec protein translocase complex. Interacts with the SecYEG preprotein conducting channel. Has a central role in coupling the hydrolysis of ATP to the transfer of proteins into and across the cell membrane, serving as an ATP-driven molecular motor driving the stepwise translocation of polypeptide chains across the membrane.</text>
</comment>
<comment type="catalytic activity">
    <reaction evidence="1">
        <text>ATP + H2O + cellular proteinSide 1 = ADP + phosphate + cellular proteinSide 2.</text>
        <dbReference type="EC" id="7.4.2.8"/>
    </reaction>
</comment>
<comment type="cofactor">
    <cofactor evidence="1">
        <name>Zn(2+)</name>
        <dbReference type="ChEBI" id="CHEBI:29105"/>
    </cofactor>
    <text evidence="1">May bind 1 zinc ion per subunit.</text>
</comment>
<comment type="subunit">
    <text evidence="1">Monomer and homodimer. Part of the essential Sec protein translocation apparatus which comprises SecA, SecYEG and auxiliary proteins SecDF. Other proteins may also be involved.</text>
</comment>
<comment type="subcellular location">
    <subcellularLocation>
        <location evidence="1">Cell membrane</location>
        <topology evidence="1">Peripheral membrane protein</topology>
        <orientation evidence="1">Cytoplasmic side</orientation>
    </subcellularLocation>
    <subcellularLocation>
        <location evidence="1">Cytoplasm</location>
    </subcellularLocation>
    <text evidence="1">Distribution is 50-50.</text>
</comment>
<comment type="similarity">
    <text evidence="1">Belongs to the SecA family.</text>
</comment>
<keyword id="KW-0067">ATP-binding</keyword>
<keyword id="KW-1003">Cell membrane</keyword>
<keyword id="KW-0963">Cytoplasm</keyword>
<keyword id="KW-0472">Membrane</keyword>
<keyword id="KW-0479">Metal-binding</keyword>
<keyword id="KW-0547">Nucleotide-binding</keyword>
<keyword id="KW-0653">Protein transport</keyword>
<keyword id="KW-1278">Translocase</keyword>
<keyword id="KW-0811">Translocation</keyword>
<keyword id="KW-0813">Transport</keyword>
<keyword id="KW-0862">Zinc</keyword>
<gene>
    <name evidence="1" type="primary">secA1</name>
    <name type="ordered locus">SAUSA300_0737</name>
</gene>
<evidence type="ECO:0000255" key="1">
    <source>
        <dbReference type="HAMAP-Rule" id="MF_01382"/>
    </source>
</evidence>
<evidence type="ECO:0000256" key="2">
    <source>
        <dbReference type="SAM" id="MobiDB-lite"/>
    </source>
</evidence>
<feature type="chain" id="PRO_0000321016" description="Protein translocase subunit SecA 1">
    <location>
        <begin position="1"/>
        <end position="843"/>
    </location>
</feature>
<feature type="region of interest" description="Disordered" evidence="2">
    <location>
        <begin position="799"/>
        <end position="826"/>
    </location>
</feature>
<feature type="compositionally biased region" description="Basic and acidic residues" evidence="2">
    <location>
        <begin position="799"/>
        <end position="813"/>
    </location>
</feature>
<feature type="binding site" evidence="1">
    <location>
        <position position="91"/>
    </location>
    <ligand>
        <name>ATP</name>
        <dbReference type="ChEBI" id="CHEBI:30616"/>
    </ligand>
</feature>
<feature type="binding site" evidence="1">
    <location>
        <begin position="109"/>
        <end position="113"/>
    </location>
    <ligand>
        <name>ATP</name>
        <dbReference type="ChEBI" id="CHEBI:30616"/>
    </ligand>
</feature>
<feature type="binding site" evidence="1">
    <location>
        <position position="498"/>
    </location>
    <ligand>
        <name>ATP</name>
        <dbReference type="ChEBI" id="CHEBI:30616"/>
    </ligand>
</feature>
<feature type="binding site" evidence="1">
    <location>
        <position position="829"/>
    </location>
    <ligand>
        <name>Zn(2+)</name>
        <dbReference type="ChEBI" id="CHEBI:29105"/>
    </ligand>
</feature>
<feature type="binding site" evidence="1">
    <location>
        <position position="831"/>
    </location>
    <ligand>
        <name>Zn(2+)</name>
        <dbReference type="ChEBI" id="CHEBI:29105"/>
    </ligand>
</feature>
<feature type="binding site" evidence="1">
    <location>
        <position position="840"/>
    </location>
    <ligand>
        <name>Zn(2+)</name>
        <dbReference type="ChEBI" id="CHEBI:29105"/>
    </ligand>
</feature>
<feature type="binding site" evidence="1">
    <location>
        <position position="841"/>
    </location>
    <ligand>
        <name>Zn(2+)</name>
        <dbReference type="ChEBI" id="CHEBI:29105"/>
    </ligand>
</feature>